<keyword id="KW-0223">Dioxygenase</keyword>
<keyword id="KW-0408">Iron</keyword>
<keyword id="KW-0479">Metal-binding</keyword>
<keyword id="KW-0560">Oxidoreductase</keyword>
<keyword id="KW-1185">Reference proteome</keyword>
<dbReference type="EC" id="1.14.11.15"/>
<dbReference type="EMBL" id="DQ118250">
    <property type="protein sequence ID" value="AAZ94377.1"/>
    <property type="molecule type" value="mRNA"/>
</dbReference>
<dbReference type="SMR" id="Q3I411"/>
<dbReference type="STRING" id="4565.Q3I411"/>
<dbReference type="EnsemblPlants" id="TraesARI3A03G01365600.1">
    <property type="protein sequence ID" value="TraesARI3A03G01365600.1"/>
    <property type="gene ID" value="TraesARI3A03G01365600"/>
</dbReference>
<dbReference type="EnsemblPlants" id="TraesCAD_scaffold_086214_01G000100.1">
    <property type="protein sequence ID" value="TraesCAD_scaffold_086214_01G000100.1"/>
    <property type="gene ID" value="TraesCAD_scaffold_086214_01G000100"/>
</dbReference>
<dbReference type="EnsemblPlants" id="TraesCLE_scaffold_050980_01G000100.1">
    <property type="protein sequence ID" value="TraesCLE_scaffold_050980_01G000100.1"/>
    <property type="gene ID" value="TraesCLE_scaffold_050980_01G000100"/>
</dbReference>
<dbReference type="EnsemblPlants" id="TraesJAG3A03G01356730.1">
    <property type="protein sequence ID" value="TraesJAG3A03G01356730.1"/>
    <property type="gene ID" value="TraesJAG3A03G01356730"/>
</dbReference>
<dbReference type="EnsemblPlants" id="TraesJUL3A03G01359270.1">
    <property type="protein sequence ID" value="TraesJUL3A03G01359270.1"/>
    <property type="gene ID" value="TraesJUL3A03G01359270"/>
</dbReference>
<dbReference type="EnsemblPlants" id="TraesKAR3A01G0064190.1">
    <property type="protein sequence ID" value="cds.TraesKAR3A01G0064190.1"/>
    <property type="gene ID" value="TraesKAR3A01G0064190"/>
</dbReference>
<dbReference type="EnsemblPlants" id="TraesLAC3A03G01291300.1">
    <property type="protein sequence ID" value="TraesLAC3A03G01291300.1"/>
    <property type="gene ID" value="TraesLAC3A03G01291300"/>
</dbReference>
<dbReference type="EnsemblPlants" id="TraesLDM3A03G01350020.1">
    <property type="protein sequence ID" value="TraesLDM3A03G01350020.1"/>
    <property type="gene ID" value="TraesLDM3A03G01350020"/>
</dbReference>
<dbReference type="EnsemblPlants" id="TraesMAC3A03G01345620.1">
    <property type="protein sequence ID" value="TraesMAC3A03G01345620.1"/>
    <property type="gene ID" value="TraesMAC3A03G01345620"/>
</dbReference>
<dbReference type="EnsemblPlants" id="TraesNOR3A03G01367690.1">
    <property type="protein sequence ID" value="TraesNOR3A03G01367690.1"/>
    <property type="gene ID" value="TraesNOR3A03G01367690"/>
</dbReference>
<dbReference type="EnsemblPlants" id="TraesPARA_EIv1.0_0796340.1">
    <property type="protein sequence ID" value="TraesPARA_EIv1.0_0796340.1.CDS"/>
    <property type="gene ID" value="TraesPARA_EIv1.0_0796340"/>
</dbReference>
<dbReference type="EnsemblPlants" id="TraesROB_scaffold_121309_01G000100.1">
    <property type="protein sequence ID" value="TraesROB_scaffold_121309_01G000100.1"/>
    <property type="gene ID" value="TraesROB_scaffold_121309_01G000100"/>
</dbReference>
<dbReference type="EnsemblPlants" id="TraesSTA3A03G01339020.1">
    <property type="protein sequence ID" value="TraesSTA3A03G01339020.1"/>
    <property type="gene ID" value="TraesSTA3A03G01339020"/>
</dbReference>
<dbReference type="EnsemblPlants" id="TraesSYM3A03G01368880.1">
    <property type="protein sequence ID" value="TraesSYM3A03G01368880.1"/>
    <property type="gene ID" value="TraesSYM3A03G01368880"/>
</dbReference>
<dbReference type="EnsemblPlants" id="TraesWEE_scaffold_061575_01G000100.1">
    <property type="protein sequence ID" value="TraesWEE_scaffold_061575_01G000100.1"/>
    <property type="gene ID" value="TraesWEE_scaffold_061575_01G000100"/>
</dbReference>
<dbReference type="Gramene" id="TraesARI3A03G01365600.1">
    <property type="protein sequence ID" value="TraesARI3A03G01365600.1"/>
    <property type="gene ID" value="TraesARI3A03G01365600"/>
</dbReference>
<dbReference type="Gramene" id="TraesCAD_scaffold_086214_01G000100.1">
    <property type="protein sequence ID" value="TraesCAD_scaffold_086214_01G000100.1"/>
    <property type="gene ID" value="TraesCAD_scaffold_086214_01G000100"/>
</dbReference>
<dbReference type="Gramene" id="TraesCLE_scaffold_050980_01G000100.1">
    <property type="protein sequence ID" value="TraesCLE_scaffold_050980_01G000100.1"/>
    <property type="gene ID" value="TraesCLE_scaffold_050980_01G000100"/>
</dbReference>
<dbReference type="Gramene" id="TraesJAG3A03G01356730.1">
    <property type="protein sequence ID" value="TraesJAG3A03G01356730.1"/>
    <property type="gene ID" value="TraesJAG3A03G01356730"/>
</dbReference>
<dbReference type="Gramene" id="TraesJUL3A03G01359270.1">
    <property type="protein sequence ID" value="TraesJUL3A03G01359270.1"/>
    <property type="gene ID" value="TraesJUL3A03G01359270"/>
</dbReference>
<dbReference type="Gramene" id="TraesKAR3A01G0064190.1">
    <property type="protein sequence ID" value="cds.TraesKAR3A01G0064190.1"/>
    <property type="gene ID" value="TraesKAR3A01G0064190"/>
</dbReference>
<dbReference type="Gramene" id="TraesLAC3A03G01291300.1">
    <property type="protein sequence ID" value="TraesLAC3A03G01291300.1"/>
    <property type="gene ID" value="TraesLAC3A03G01291300"/>
</dbReference>
<dbReference type="Gramene" id="TraesLDM3A03G01350020.1">
    <property type="protein sequence ID" value="TraesLDM3A03G01350020.1"/>
    <property type="gene ID" value="TraesLDM3A03G01350020"/>
</dbReference>
<dbReference type="Gramene" id="TraesMAC3A03G01345620.1">
    <property type="protein sequence ID" value="TraesMAC3A03G01345620.1"/>
    <property type="gene ID" value="TraesMAC3A03G01345620"/>
</dbReference>
<dbReference type="Gramene" id="TraesNOR3A03G01367690.1">
    <property type="protein sequence ID" value="TraesNOR3A03G01367690.1"/>
    <property type="gene ID" value="TraesNOR3A03G01367690"/>
</dbReference>
<dbReference type="Gramene" id="TraesPARA_EIv1.0_0796340.1">
    <property type="protein sequence ID" value="TraesPARA_EIv1.0_0796340.1.CDS"/>
    <property type="gene ID" value="TraesPARA_EIv1.0_0796340"/>
</dbReference>
<dbReference type="Gramene" id="TraesROB_scaffold_121309_01G000100.1">
    <property type="protein sequence ID" value="TraesROB_scaffold_121309_01G000100.1"/>
    <property type="gene ID" value="TraesROB_scaffold_121309_01G000100"/>
</dbReference>
<dbReference type="Gramene" id="TraesSTA3A03G01339020.1">
    <property type="protein sequence ID" value="TraesSTA3A03G01339020.1"/>
    <property type="gene ID" value="TraesSTA3A03G01339020"/>
</dbReference>
<dbReference type="Gramene" id="TraesSYM3A03G01368880.1">
    <property type="protein sequence ID" value="TraesSYM3A03G01368880.1"/>
    <property type="gene ID" value="TraesSYM3A03G01368880"/>
</dbReference>
<dbReference type="Gramene" id="TraesWEE_scaffold_061575_01G000100.1">
    <property type="protein sequence ID" value="TraesWEE_scaffold_061575_01G000100.1"/>
    <property type="gene ID" value="TraesWEE_scaffold_061575_01G000100"/>
</dbReference>
<dbReference type="BioCyc" id="MetaCyc:MONOMER-11644"/>
<dbReference type="BRENDA" id="1.14.11.15">
    <property type="organism ID" value="6500"/>
</dbReference>
<dbReference type="SABIO-RK" id="Q3I411"/>
<dbReference type="Proteomes" id="UP000019116">
    <property type="component" value="Unplaced"/>
</dbReference>
<dbReference type="ExpressionAtlas" id="Q3I411">
    <property type="expression patterns" value="baseline and differential"/>
</dbReference>
<dbReference type="GO" id="GO:0016707">
    <property type="term" value="F:gibberellin 3-beta-dioxygenase activity"/>
    <property type="evidence" value="ECO:0000318"/>
    <property type="project" value="GO_Central"/>
</dbReference>
<dbReference type="GO" id="GO:0046872">
    <property type="term" value="F:metal ion binding"/>
    <property type="evidence" value="ECO:0007669"/>
    <property type="project" value="UniProtKB-KW"/>
</dbReference>
<dbReference type="GO" id="GO:0009686">
    <property type="term" value="P:gibberellin biosynthetic process"/>
    <property type="evidence" value="ECO:0000318"/>
    <property type="project" value="GO_Central"/>
</dbReference>
<dbReference type="GO" id="GO:0009416">
    <property type="term" value="P:response to light stimulus"/>
    <property type="evidence" value="ECO:0000318"/>
    <property type="project" value="GO_Central"/>
</dbReference>
<dbReference type="FunFam" id="2.60.120.330:FF:000013">
    <property type="entry name" value="Gibberellin 3-beta-dioxygenase 1"/>
    <property type="match status" value="1"/>
</dbReference>
<dbReference type="Gene3D" id="2.60.120.330">
    <property type="entry name" value="B-lactam Antibiotic, Isopenicillin N Synthase, Chain"/>
    <property type="match status" value="1"/>
</dbReference>
<dbReference type="InterPro" id="IPR026992">
    <property type="entry name" value="DIOX_N"/>
</dbReference>
<dbReference type="InterPro" id="IPR044861">
    <property type="entry name" value="IPNS-like_FE2OG_OXY"/>
</dbReference>
<dbReference type="InterPro" id="IPR027443">
    <property type="entry name" value="IPNS-like_sf"/>
</dbReference>
<dbReference type="InterPro" id="IPR050231">
    <property type="entry name" value="Iron_ascorbate_oxido_reductase"/>
</dbReference>
<dbReference type="InterPro" id="IPR005123">
    <property type="entry name" value="Oxoglu/Fe-dep_dioxygenase_dom"/>
</dbReference>
<dbReference type="PANTHER" id="PTHR47990">
    <property type="entry name" value="2-OXOGLUTARATE (2OG) AND FE(II)-DEPENDENT OXYGENASE SUPERFAMILY PROTEIN-RELATED"/>
    <property type="match status" value="1"/>
</dbReference>
<dbReference type="Pfam" id="PF03171">
    <property type="entry name" value="2OG-FeII_Oxy"/>
    <property type="match status" value="1"/>
</dbReference>
<dbReference type="Pfam" id="PF14226">
    <property type="entry name" value="DIOX_N"/>
    <property type="match status" value="1"/>
</dbReference>
<dbReference type="SUPFAM" id="SSF51197">
    <property type="entry name" value="Clavaminate synthase-like"/>
    <property type="match status" value="1"/>
</dbReference>
<dbReference type="PROSITE" id="PS51471">
    <property type="entry name" value="FE2OG_OXY"/>
    <property type="match status" value="1"/>
</dbReference>
<evidence type="ECO:0000250" key="1"/>
<evidence type="ECO:0000255" key="2"/>
<evidence type="ECO:0000255" key="3">
    <source>
        <dbReference type="PROSITE-ProRule" id="PRU00805"/>
    </source>
</evidence>
<evidence type="ECO:0000269" key="4">
    <source>
    </source>
</evidence>
<evidence type="ECO:0000305" key="5"/>
<protein>
    <recommendedName>
        <fullName>Gibberellin 3-beta-dioxygenase 2-1</fullName>
        <ecNumber>1.14.11.15</ecNumber>
    </recommendedName>
    <alternativeName>
        <fullName>Gibberellin 3 beta-hydroxylase 2-1</fullName>
    </alternativeName>
    <alternativeName>
        <fullName>Gibberellin 3-oxidase 2-1</fullName>
    </alternativeName>
</protein>
<comment type="function">
    <text evidence="4">Converts the inactive gibberellin precursors GA9 and GA20 in the bioactives gibberellins GA4 and GA1. Also accepts GA15, GA44, the 2,3-unsaturated GA5 and 2,3-dihydroGA9 as substrate. No activity with GA12, GA53, GA24, GA19 and GA25. Also possesses 2-beta-hydroxylase, 2,3-desaturase, 2,3-epoxidase and 13-hydroxylase activities.</text>
</comment>
<comment type="catalytic activity">
    <reaction>
        <text>gibberellin A20 + 2-oxoglutarate + O2 = gibberellin A1 + succinate + CO2</text>
        <dbReference type="Rhea" id="RHEA:10104"/>
        <dbReference type="ChEBI" id="CHEBI:15379"/>
        <dbReference type="ChEBI" id="CHEBI:16526"/>
        <dbReference type="ChEBI" id="CHEBI:16810"/>
        <dbReference type="ChEBI" id="CHEBI:30031"/>
        <dbReference type="ChEBI" id="CHEBI:58524"/>
        <dbReference type="ChEBI" id="CHEBI:58526"/>
        <dbReference type="EC" id="1.14.11.15"/>
    </reaction>
</comment>
<comment type="cofactor">
    <cofactor evidence="1">
        <name>L-ascorbate</name>
        <dbReference type="ChEBI" id="CHEBI:38290"/>
    </cofactor>
</comment>
<comment type="cofactor">
    <cofactor evidence="1">
        <name>Fe cation</name>
        <dbReference type="ChEBI" id="CHEBI:24875"/>
    </cofactor>
</comment>
<comment type="biophysicochemical properties">
    <kinetics>
        <KM evidence="4">1 uM for GA9</KM>
        <KM evidence="4">2.02 uM for GA20</KM>
    </kinetics>
</comment>
<comment type="tissue specificity">
    <text evidence="4">Expressed in internodes, nodes and the ear of the elongating stem.</text>
</comment>
<comment type="developmental stage">
    <text evidence="4">Highly expressed in the embryo and the surrounding maternal tissues, the pericarp and the integuments. Also found in the germinating grain.</text>
</comment>
<comment type="similarity">
    <text evidence="5">Belongs to the iron/ascorbate-dependent oxidoreductase family. GA3OX subfamily.</text>
</comment>
<name>G3O21_WHEAT</name>
<accession>Q3I411</accession>
<sequence>MPTPSHLSKDPRYFDFRAARRVPETHAWPGLHDHPVVDGSGAGGGPDAVPVVDMRDPCAAEAVALAAQDWGAFLLEGHGVPLELLAGVEAAIGGMFALPASEKMRAVRRPGDSCGYGSPPISSFFSKCMWSEGYTFSPANLRSDLRKLWPKAGHDYRHFCAVMEEFHREMRALADKLLELFLVALGLTGEQVAAVESEHKIAETMTATMHLNWYPKCPDPKRALGLIAHTDSGFFTFVLQSLVPGLQLFRHGPDRWVTVPAVPGAMVVNVGDLFQILTNGRFHSVYHRAVVNRDSDRISLGYFLGPPAHVKVAPLREALAGTPAAYRAVTWPEYMGVRKKAFTTGASALKMVAISTDNDAANDTDDLISS</sequence>
<feature type="chain" id="PRO_0000067317" description="Gibberellin 3-beta-dioxygenase 2-1">
    <location>
        <begin position="1"/>
        <end position="370"/>
    </location>
</feature>
<feature type="domain" description="Fe2OG dioxygenase" evidence="3">
    <location>
        <begin position="205"/>
        <end position="306"/>
    </location>
</feature>
<feature type="active site" evidence="2">
    <location>
        <position position="297"/>
    </location>
</feature>
<feature type="binding site" evidence="3">
    <location>
        <position position="229"/>
    </location>
    <ligand>
        <name>Fe cation</name>
        <dbReference type="ChEBI" id="CHEBI:24875"/>
    </ligand>
</feature>
<feature type="binding site" evidence="3">
    <location>
        <position position="231"/>
    </location>
    <ligand>
        <name>Fe cation</name>
        <dbReference type="ChEBI" id="CHEBI:24875"/>
    </ligand>
</feature>
<feature type="binding site" evidence="3">
    <location>
        <position position="287"/>
    </location>
    <ligand>
        <name>Fe cation</name>
        <dbReference type="ChEBI" id="CHEBI:24875"/>
    </ligand>
</feature>
<gene>
    <name type="primary">GA3ox2-1</name>
</gene>
<reference key="1">
    <citation type="journal article" date="2006" name="Planta">
        <title>Function and transcript analysis of gibberellin-biosynthetic enzymes in wheat.</title>
        <authorList>
            <person name="Appleford N.E."/>
            <person name="Evans D.J."/>
            <person name="Lenton J.R."/>
            <person name="Gaskin P."/>
            <person name="Croker S.J."/>
            <person name="Devos K.M."/>
            <person name="Phillips A.L."/>
            <person name="Hedden P."/>
        </authorList>
    </citation>
    <scope>NUCLEOTIDE SEQUENCE [MRNA]</scope>
    <scope>FUNCTION</scope>
    <scope>BIOPHYSICOCHEMICAL PROPERTIES</scope>
    <scope>DEVELOPMENTAL STAGE</scope>
    <scope>TISSUE SPECIFICITY</scope>
    <source>
        <strain>cv. Maris Huntsman</strain>
        <tissue>Scutellum</tissue>
    </source>
</reference>
<organism>
    <name type="scientific">Triticum aestivum</name>
    <name type="common">Wheat</name>
    <dbReference type="NCBI Taxonomy" id="4565"/>
    <lineage>
        <taxon>Eukaryota</taxon>
        <taxon>Viridiplantae</taxon>
        <taxon>Streptophyta</taxon>
        <taxon>Embryophyta</taxon>
        <taxon>Tracheophyta</taxon>
        <taxon>Spermatophyta</taxon>
        <taxon>Magnoliopsida</taxon>
        <taxon>Liliopsida</taxon>
        <taxon>Poales</taxon>
        <taxon>Poaceae</taxon>
        <taxon>BOP clade</taxon>
        <taxon>Pooideae</taxon>
        <taxon>Triticodae</taxon>
        <taxon>Triticeae</taxon>
        <taxon>Triticinae</taxon>
        <taxon>Triticum</taxon>
    </lineage>
</organism>
<proteinExistence type="evidence at protein level"/>